<dbReference type="EC" id="6.3.5.-" evidence="1"/>
<dbReference type="EMBL" id="CP000781">
    <property type="protein sequence ID" value="ABS69149.1"/>
    <property type="molecule type" value="Genomic_DNA"/>
</dbReference>
<dbReference type="SMR" id="A7IMA6"/>
<dbReference type="STRING" id="78245.Xaut_3925"/>
<dbReference type="KEGG" id="xau:Xaut_3925"/>
<dbReference type="eggNOG" id="COG0721">
    <property type="taxonomic scope" value="Bacteria"/>
</dbReference>
<dbReference type="HOGENOM" id="CLU_105899_2_0_5"/>
<dbReference type="OrthoDB" id="9794326at2"/>
<dbReference type="PhylomeDB" id="A7IMA6"/>
<dbReference type="Proteomes" id="UP000002417">
    <property type="component" value="Chromosome"/>
</dbReference>
<dbReference type="GO" id="GO:0050566">
    <property type="term" value="F:asparaginyl-tRNA synthase (glutamine-hydrolyzing) activity"/>
    <property type="evidence" value="ECO:0007669"/>
    <property type="project" value="RHEA"/>
</dbReference>
<dbReference type="GO" id="GO:0005524">
    <property type="term" value="F:ATP binding"/>
    <property type="evidence" value="ECO:0007669"/>
    <property type="project" value="UniProtKB-KW"/>
</dbReference>
<dbReference type="GO" id="GO:0050567">
    <property type="term" value="F:glutaminyl-tRNA synthase (glutamine-hydrolyzing) activity"/>
    <property type="evidence" value="ECO:0007669"/>
    <property type="project" value="UniProtKB-UniRule"/>
</dbReference>
<dbReference type="GO" id="GO:0070681">
    <property type="term" value="P:glutaminyl-tRNAGln biosynthesis via transamidation"/>
    <property type="evidence" value="ECO:0007669"/>
    <property type="project" value="TreeGrafter"/>
</dbReference>
<dbReference type="GO" id="GO:0006450">
    <property type="term" value="P:regulation of translational fidelity"/>
    <property type="evidence" value="ECO:0007669"/>
    <property type="project" value="InterPro"/>
</dbReference>
<dbReference type="GO" id="GO:0006412">
    <property type="term" value="P:translation"/>
    <property type="evidence" value="ECO:0007669"/>
    <property type="project" value="UniProtKB-UniRule"/>
</dbReference>
<dbReference type="Gene3D" id="1.10.20.60">
    <property type="entry name" value="Glu-tRNAGln amidotransferase C subunit, N-terminal domain"/>
    <property type="match status" value="1"/>
</dbReference>
<dbReference type="HAMAP" id="MF_00122">
    <property type="entry name" value="GatC"/>
    <property type="match status" value="1"/>
</dbReference>
<dbReference type="InterPro" id="IPR036113">
    <property type="entry name" value="Asp/Glu-ADT_sf_sub_c"/>
</dbReference>
<dbReference type="InterPro" id="IPR003837">
    <property type="entry name" value="GatC"/>
</dbReference>
<dbReference type="NCBIfam" id="TIGR00135">
    <property type="entry name" value="gatC"/>
    <property type="match status" value="1"/>
</dbReference>
<dbReference type="PANTHER" id="PTHR15004">
    <property type="entry name" value="GLUTAMYL-TRNA(GLN) AMIDOTRANSFERASE SUBUNIT C, MITOCHONDRIAL"/>
    <property type="match status" value="1"/>
</dbReference>
<dbReference type="PANTHER" id="PTHR15004:SF0">
    <property type="entry name" value="GLUTAMYL-TRNA(GLN) AMIDOTRANSFERASE SUBUNIT C, MITOCHONDRIAL"/>
    <property type="match status" value="1"/>
</dbReference>
<dbReference type="Pfam" id="PF02686">
    <property type="entry name" value="GatC"/>
    <property type="match status" value="1"/>
</dbReference>
<dbReference type="SUPFAM" id="SSF141000">
    <property type="entry name" value="Glu-tRNAGln amidotransferase C subunit"/>
    <property type="match status" value="1"/>
</dbReference>
<protein>
    <recommendedName>
        <fullName evidence="1">Aspartyl/glutamyl-tRNA(Asn/Gln) amidotransferase subunit C</fullName>
        <shortName evidence="1">Asp/Glu-ADT subunit C</shortName>
        <ecNumber evidence="1">6.3.5.-</ecNumber>
    </recommendedName>
</protein>
<feature type="chain" id="PRO_1000095325" description="Aspartyl/glutamyl-tRNA(Asn/Gln) amidotransferase subunit C">
    <location>
        <begin position="1"/>
        <end position="95"/>
    </location>
</feature>
<proteinExistence type="inferred from homology"/>
<gene>
    <name evidence="1" type="primary">gatC</name>
    <name type="ordered locus">Xaut_3925</name>
</gene>
<comment type="function">
    <text evidence="1">Allows the formation of correctly charged Asn-tRNA(Asn) or Gln-tRNA(Gln) through the transamidation of misacylated Asp-tRNA(Asn) or Glu-tRNA(Gln) in organisms which lack either or both of asparaginyl-tRNA or glutaminyl-tRNA synthetases. The reaction takes place in the presence of glutamine and ATP through an activated phospho-Asp-tRNA(Asn) or phospho-Glu-tRNA(Gln).</text>
</comment>
<comment type="catalytic activity">
    <reaction evidence="1">
        <text>L-glutamyl-tRNA(Gln) + L-glutamine + ATP + H2O = L-glutaminyl-tRNA(Gln) + L-glutamate + ADP + phosphate + H(+)</text>
        <dbReference type="Rhea" id="RHEA:17521"/>
        <dbReference type="Rhea" id="RHEA-COMP:9681"/>
        <dbReference type="Rhea" id="RHEA-COMP:9684"/>
        <dbReference type="ChEBI" id="CHEBI:15377"/>
        <dbReference type="ChEBI" id="CHEBI:15378"/>
        <dbReference type="ChEBI" id="CHEBI:29985"/>
        <dbReference type="ChEBI" id="CHEBI:30616"/>
        <dbReference type="ChEBI" id="CHEBI:43474"/>
        <dbReference type="ChEBI" id="CHEBI:58359"/>
        <dbReference type="ChEBI" id="CHEBI:78520"/>
        <dbReference type="ChEBI" id="CHEBI:78521"/>
        <dbReference type="ChEBI" id="CHEBI:456216"/>
    </reaction>
</comment>
<comment type="catalytic activity">
    <reaction evidence="1">
        <text>L-aspartyl-tRNA(Asn) + L-glutamine + ATP + H2O = L-asparaginyl-tRNA(Asn) + L-glutamate + ADP + phosphate + 2 H(+)</text>
        <dbReference type="Rhea" id="RHEA:14513"/>
        <dbReference type="Rhea" id="RHEA-COMP:9674"/>
        <dbReference type="Rhea" id="RHEA-COMP:9677"/>
        <dbReference type="ChEBI" id="CHEBI:15377"/>
        <dbReference type="ChEBI" id="CHEBI:15378"/>
        <dbReference type="ChEBI" id="CHEBI:29985"/>
        <dbReference type="ChEBI" id="CHEBI:30616"/>
        <dbReference type="ChEBI" id="CHEBI:43474"/>
        <dbReference type="ChEBI" id="CHEBI:58359"/>
        <dbReference type="ChEBI" id="CHEBI:78515"/>
        <dbReference type="ChEBI" id="CHEBI:78516"/>
        <dbReference type="ChEBI" id="CHEBI:456216"/>
    </reaction>
</comment>
<comment type="subunit">
    <text evidence="1">Heterotrimer of A, B and C subunits.</text>
</comment>
<comment type="similarity">
    <text evidence="1">Belongs to the GatC family.</text>
</comment>
<accession>A7IMA6</accession>
<reference key="1">
    <citation type="submission" date="2007-07" db="EMBL/GenBank/DDBJ databases">
        <title>Complete sequence of chromosome of Xanthobacter autotrophicus Py2.</title>
        <authorList>
            <consortium name="US DOE Joint Genome Institute"/>
            <person name="Copeland A."/>
            <person name="Lucas S."/>
            <person name="Lapidus A."/>
            <person name="Barry K."/>
            <person name="Glavina del Rio T."/>
            <person name="Hammon N."/>
            <person name="Israni S."/>
            <person name="Dalin E."/>
            <person name="Tice H."/>
            <person name="Pitluck S."/>
            <person name="Sims D."/>
            <person name="Brettin T."/>
            <person name="Bruce D."/>
            <person name="Detter J.C."/>
            <person name="Han C."/>
            <person name="Tapia R."/>
            <person name="Brainard J."/>
            <person name="Schmutz J."/>
            <person name="Larimer F."/>
            <person name="Land M."/>
            <person name="Hauser L."/>
            <person name="Kyrpides N."/>
            <person name="Kim E."/>
            <person name="Ensigns S.A."/>
            <person name="Richardson P."/>
        </authorList>
    </citation>
    <scope>NUCLEOTIDE SEQUENCE [LARGE SCALE GENOMIC DNA]</scope>
    <source>
        <strain>ATCC BAA-1158 / Py2</strain>
    </source>
</reference>
<evidence type="ECO:0000255" key="1">
    <source>
        <dbReference type="HAMAP-Rule" id="MF_00122"/>
    </source>
</evidence>
<sequence length="95" mass="10360">MSVDQATVRRVAHLARISVREDELGHLQNELNAILEFVEQLADLDVSGVEPLTSVVPVELPMREDVVTDGHCPEKVLANAPDAEGGFFTVPKVVE</sequence>
<organism>
    <name type="scientific">Xanthobacter autotrophicus (strain ATCC BAA-1158 / Py2)</name>
    <dbReference type="NCBI Taxonomy" id="78245"/>
    <lineage>
        <taxon>Bacteria</taxon>
        <taxon>Pseudomonadati</taxon>
        <taxon>Pseudomonadota</taxon>
        <taxon>Alphaproteobacteria</taxon>
        <taxon>Hyphomicrobiales</taxon>
        <taxon>Xanthobacteraceae</taxon>
        <taxon>Xanthobacter</taxon>
    </lineage>
</organism>
<keyword id="KW-0067">ATP-binding</keyword>
<keyword id="KW-0436">Ligase</keyword>
<keyword id="KW-0547">Nucleotide-binding</keyword>
<keyword id="KW-0648">Protein biosynthesis</keyword>
<keyword id="KW-1185">Reference proteome</keyword>
<name>GATC_XANP2</name>